<accession>Q5ZR82</accession>
<evidence type="ECO:0000255" key="1">
    <source>
        <dbReference type="HAMAP-Rule" id="MF_00379"/>
    </source>
</evidence>
<name>MNME_LEGPH</name>
<comment type="function">
    <text evidence="1">Exhibits a very high intrinsic GTPase hydrolysis rate. Involved in the addition of a carboxymethylaminomethyl (cmnm) group at the wobble position (U34) of certain tRNAs, forming tRNA-cmnm(5)s(2)U34.</text>
</comment>
<comment type="cofactor">
    <cofactor evidence="1">
        <name>K(+)</name>
        <dbReference type="ChEBI" id="CHEBI:29103"/>
    </cofactor>
    <text evidence="1">Binds 1 potassium ion per subunit.</text>
</comment>
<comment type="subunit">
    <text evidence="1">Homodimer. Heterotetramer of two MnmE and two MnmG subunits.</text>
</comment>
<comment type="subcellular location">
    <subcellularLocation>
        <location evidence="1">Cytoplasm</location>
    </subcellularLocation>
</comment>
<comment type="similarity">
    <text evidence="1">Belongs to the TRAFAC class TrmE-Era-EngA-EngB-Septin-like GTPase superfamily. TrmE GTPase family.</text>
</comment>
<organism>
    <name type="scientific">Legionella pneumophila subsp. pneumophila (strain Philadelphia 1 / ATCC 33152 / DSM 7513)</name>
    <dbReference type="NCBI Taxonomy" id="272624"/>
    <lineage>
        <taxon>Bacteria</taxon>
        <taxon>Pseudomonadati</taxon>
        <taxon>Pseudomonadota</taxon>
        <taxon>Gammaproteobacteria</taxon>
        <taxon>Legionellales</taxon>
        <taxon>Legionellaceae</taxon>
        <taxon>Legionella</taxon>
    </lineage>
</organism>
<gene>
    <name evidence="1" type="primary">mnmE</name>
    <name evidence="1" type="synonym">trmE</name>
    <name type="ordered locus">lpg3001</name>
</gene>
<proteinExistence type="inferred from homology"/>
<feature type="chain" id="PRO_0000345819" description="tRNA modification GTPase MnmE">
    <location>
        <begin position="1"/>
        <end position="446"/>
    </location>
</feature>
<feature type="domain" description="TrmE-type G">
    <location>
        <begin position="215"/>
        <end position="370"/>
    </location>
</feature>
<feature type="binding site" evidence="1">
    <location>
        <position position="22"/>
    </location>
    <ligand>
        <name>(6S)-5-formyl-5,6,7,8-tetrahydrofolate</name>
        <dbReference type="ChEBI" id="CHEBI:57457"/>
    </ligand>
</feature>
<feature type="binding site" evidence="1">
    <location>
        <position position="80"/>
    </location>
    <ligand>
        <name>(6S)-5-formyl-5,6,7,8-tetrahydrofolate</name>
        <dbReference type="ChEBI" id="CHEBI:57457"/>
    </ligand>
</feature>
<feature type="binding site" evidence="1">
    <location>
        <position position="119"/>
    </location>
    <ligand>
        <name>(6S)-5-formyl-5,6,7,8-tetrahydrofolate</name>
        <dbReference type="ChEBI" id="CHEBI:57457"/>
    </ligand>
</feature>
<feature type="binding site" evidence="1">
    <location>
        <begin position="225"/>
        <end position="230"/>
    </location>
    <ligand>
        <name>GTP</name>
        <dbReference type="ChEBI" id="CHEBI:37565"/>
    </ligand>
</feature>
<feature type="binding site" evidence="1">
    <location>
        <position position="225"/>
    </location>
    <ligand>
        <name>K(+)</name>
        <dbReference type="ChEBI" id="CHEBI:29103"/>
    </ligand>
</feature>
<feature type="binding site" evidence="1">
    <location>
        <position position="229"/>
    </location>
    <ligand>
        <name>Mg(2+)</name>
        <dbReference type="ChEBI" id="CHEBI:18420"/>
    </ligand>
</feature>
<feature type="binding site" evidence="1">
    <location>
        <begin position="244"/>
        <end position="250"/>
    </location>
    <ligand>
        <name>GTP</name>
        <dbReference type="ChEBI" id="CHEBI:37565"/>
    </ligand>
</feature>
<feature type="binding site" evidence="1">
    <location>
        <position position="244"/>
    </location>
    <ligand>
        <name>K(+)</name>
        <dbReference type="ChEBI" id="CHEBI:29103"/>
    </ligand>
</feature>
<feature type="binding site" evidence="1">
    <location>
        <position position="246"/>
    </location>
    <ligand>
        <name>K(+)</name>
        <dbReference type="ChEBI" id="CHEBI:29103"/>
    </ligand>
</feature>
<feature type="binding site" evidence="1">
    <location>
        <position position="249"/>
    </location>
    <ligand>
        <name>K(+)</name>
        <dbReference type="ChEBI" id="CHEBI:29103"/>
    </ligand>
</feature>
<feature type="binding site" evidence="1">
    <location>
        <position position="250"/>
    </location>
    <ligand>
        <name>Mg(2+)</name>
        <dbReference type="ChEBI" id="CHEBI:18420"/>
    </ligand>
</feature>
<feature type="binding site" evidence="1">
    <location>
        <begin position="269"/>
        <end position="272"/>
    </location>
    <ligand>
        <name>GTP</name>
        <dbReference type="ChEBI" id="CHEBI:37565"/>
    </ligand>
</feature>
<feature type="binding site" evidence="1">
    <location>
        <position position="446"/>
    </location>
    <ligand>
        <name>(6S)-5-formyl-5,6,7,8-tetrahydrofolate</name>
        <dbReference type="ChEBI" id="CHEBI:57457"/>
    </ligand>
</feature>
<sequence length="446" mass="48877">MSIDTIVAIATPPGRGGVGIVRISGPNAYAIALCLNGNKALQPRLATFCSLYKGNNEVLDQGLVLYFKGPHSFTGEDVIEIQAHGSPVVLDLLIKESIAAGARLARPGEFSERAFLNDKIDLIQAEAIADLIQASSDTAARMALKSLQGDFSKKINQLNEELIYLRMYVEAAIDFPEEEIDFLNDGNVSQLLQKIIGRLEDIRSQANQGVLLREGLSLVIAGRPNAGKSTLINNLAGRDVAIVTEIAGTTRDIMREHILLDDIPLHIIDTAGLRDSDDLVEKEGIKRAWQELKRADCVLLVVDINNPDQQNSLLNELRLTLPNKIPIITVYNKIDTTKLTAKCDEHTVYLSAKTGEGLDELKKVIKQVVGYQPTEGQFLARRRHLQALDEAKALLLTGQSQLTNHKAGELLAEDLRLAHQTLCEITGEFTSDDLLGKIFSSFCIGK</sequence>
<dbReference type="EC" id="3.6.-.-" evidence="1"/>
<dbReference type="EMBL" id="AE017354">
    <property type="protein sequence ID" value="AAU29046.1"/>
    <property type="molecule type" value="Genomic_DNA"/>
</dbReference>
<dbReference type="RefSeq" id="WP_010948685.1">
    <property type="nucleotide sequence ID" value="NC_002942.5"/>
</dbReference>
<dbReference type="RefSeq" id="YP_096993.1">
    <property type="nucleotide sequence ID" value="NC_002942.5"/>
</dbReference>
<dbReference type="SMR" id="Q5ZR82"/>
<dbReference type="STRING" id="272624.lpg3001"/>
<dbReference type="PaxDb" id="272624-lpg3001"/>
<dbReference type="GeneID" id="57037006"/>
<dbReference type="KEGG" id="lpn:lpg3001"/>
<dbReference type="PATRIC" id="fig|272624.6.peg.3208"/>
<dbReference type="eggNOG" id="COG0486">
    <property type="taxonomic scope" value="Bacteria"/>
</dbReference>
<dbReference type="HOGENOM" id="CLU_019624_4_1_6"/>
<dbReference type="OrthoDB" id="9805918at2"/>
<dbReference type="Proteomes" id="UP000000609">
    <property type="component" value="Chromosome"/>
</dbReference>
<dbReference type="GO" id="GO:0005829">
    <property type="term" value="C:cytosol"/>
    <property type="evidence" value="ECO:0007669"/>
    <property type="project" value="TreeGrafter"/>
</dbReference>
<dbReference type="GO" id="GO:0005525">
    <property type="term" value="F:GTP binding"/>
    <property type="evidence" value="ECO:0007669"/>
    <property type="project" value="UniProtKB-UniRule"/>
</dbReference>
<dbReference type="GO" id="GO:0003924">
    <property type="term" value="F:GTPase activity"/>
    <property type="evidence" value="ECO:0007669"/>
    <property type="project" value="UniProtKB-UniRule"/>
</dbReference>
<dbReference type="GO" id="GO:0046872">
    <property type="term" value="F:metal ion binding"/>
    <property type="evidence" value="ECO:0007669"/>
    <property type="project" value="UniProtKB-KW"/>
</dbReference>
<dbReference type="GO" id="GO:0030488">
    <property type="term" value="P:tRNA methylation"/>
    <property type="evidence" value="ECO:0007669"/>
    <property type="project" value="TreeGrafter"/>
</dbReference>
<dbReference type="GO" id="GO:0002098">
    <property type="term" value="P:tRNA wobble uridine modification"/>
    <property type="evidence" value="ECO:0007669"/>
    <property type="project" value="TreeGrafter"/>
</dbReference>
<dbReference type="CDD" id="cd04164">
    <property type="entry name" value="trmE"/>
    <property type="match status" value="1"/>
</dbReference>
<dbReference type="CDD" id="cd14858">
    <property type="entry name" value="TrmE_N"/>
    <property type="match status" value="1"/>
</dbReference>
<dbReference type="Gene3D" id="3.40.50.300">
    <property type="entry name" value="P-loop containing nucleotide triphosphate hydrolases"/>
    <property type="match status" value="1"/>
</dbReference>
<dbReference type="Gene3D" id="3.30.1360.120">
    <property type="entry name" value="Probable tRNA modification gtpase trme, domain 1"/>
    <property type="match status" value="1"/>
</dbReference>
<dbReference type="Gene3D" id="1.20.120.430">
    <property type="entry name" value="tRNA modification GTPase MnmE domain 2"/>
    <property type="match status" value="1"/>
</dbReference>
<dbReference type="HAMAP" id="MF_00379">
    <property type="entry name" value="GTPase_MnmE"/>
    <property type="match status" value="1"/>
</dbReference>
<dbReference type="InterPro" id="IPR031168">
    <property type="entry name" value="G_TrmE"/>
</dbReference>
<dbReference type="InterPro" id="IPR006073">
    <property type="entry name" value="GTP-bd"/>
</dbReference>
<dbReference type="InterPro" id="IPR018948">
    <property type="entry name" value="GTP-bd_TrmE_N"/>
</dbReference>
<dbReference type="InterPro" id="IPR004520">
    <property type="entry name" value="GTPase_MnmE"/>
</dbReference>
<dbReference type="InterPro" id="IPR027368">
    <property type="entry name" value="MnmE_dom2"/>
</dbReference>
<dbReference type="InterPro" id="IPR025867">
    <property type="entry name" value="MnmE_helical"/>
</dbReference>
<dbReference type="InterPro" id="IPR027417">
    <property type="entry name" value="P-loop_NTPase"/>
</dbReference>
<dbReference type="InterPro" id="IPR005225">
    <property type="entry name" value="Small_GTP-bd"/>
</dbReference>
<dbReference type="InterPro" id="IPR027266">
    <property type="entry name" value="TrmE/GcvT_dom1"/>
</dbReference>
<dbReference type="NCBIfam" id="TIGR00450">
    <property type="entry name" value="mnmE_trmE_thdF"/>
    <property type="match status" value="1"/>
</dbReference>
<dbReference type="NCBIfam" id="NF003661">
    <property type="entry name" value="PRK05291.1-3"/>
    <property type="match status" value="1"/>
</dbReference>
<dbReference type="NCBIfam" id="TIGR00231">
    <property type="entry name" value="small_GTP"/>
    <property type="match status" value="1"/>
</dbReference>
<dbReference type="PANTHER" id="PTHR42714">
    <property type="entry name" value="TRNA MODIFICATION GTPASE GTPBP3"/>
    <property type="match status" value="1"/>
</dbReference>
<dbReference type="PANTHER" id="PTHR42714:SF2">
    <property type="entry name" value="TRNA MODIFICATION GTPASE GTPBP3, MITOCHONDRIAL"/>
    <property type="match status" value="1"/>
</dbReference>
<dbReference type="Pfam" id="PF01926">
    <property type="entry name" value="MMR_HSR1"/>
    <property type="match status" value="1"/>
</dbReference>
<dbReference type="Pfam" id="PF12631">
    <property type="entry name" value="MnmE_helical"/>
    <property type="match status" value="1"/>
</dbReference>
<dbReference type="Pfam" id="PF10396">
    <property type="entry name" value="TrmE_N"/>
    <property type="match status" value="1"/>
</dbReference>
<dbReference type="SUPFAM" id="SSF52540">
    <property type="entry name" value="P-loop containing nucleoside triphosphate hydrolases"/>
    <property type="match status" value="1"/>
</dbReference>
<dbReference type="PROSITE" id="PS51709">
    <property type="entry name" value="G_TRME"/>
    <property type="match status" value="1"/>
</dbReference>
<keyword id="KW-0963">Cytoplasm</keyword>
<keyword id="KW-0342">GTP-binding</keyword>
<keyword id="KW-0378">Hydrolase</keyword>
<keyword id="KW-0460">Magnesium</keyword>
<keyword id="KW-0479">Metal-binding</keyword>
<keyword id="KW-0547">Nucleotide-binding</keyword>
<keyword id="KW-0630">Potassium</keyword>
<keyword id="KW-1185">Reference proteome</keyword>
<keyword id="KW-0819">tRNA processing</keyword>
<protein>
    <recommendedName>
        <fullName evidence="1">tRNA modification GTPase MnmE</fullName>
        <ecNumber evidence="1">3.6.-.-</ecNumber>
    </recommendedName>
</protein>
<reference key="1">
    <citation type="journal article" date="2004" name="Science">
        <title>The genomic sequence of the accidental pathogen Legionella pneumophila.</title>
        <authorList>
            <person name="Chien M."/>
            <person name="Morozova I."/>
            <person name="Shi S."/>
            <person name="Sheng H."/>
            <person name="Chen J."/>
            <person name="Gomez S.M."/>
            <person name="Asamani G."/>
            <person name="Hill K."/>
            <person name="Nuara J."/>
            <person name="Feder M."/>
            <person name="Rineer J."/>
            <person name="Greenberg J.J."/>
            <person name="Steshenko V."/>
            <person name="Park S.H."/>
            <person name="Zhao B."/>
            <person name="Teplitskaya E."/>
            <person name="Edwards J.R."/>
            <person name="Pampou S."/>
            <person name="Georghiou A."/>
            <person name="Chou I.-C."/>
            <person name="Iannuccilli W."/>
            <person name="Ulz M.E."/>
            <person name="Kim D.H."/>
            <person name="Geringer-Sameth A."/>
            <person name="Goldsberry C."/>
            <person name="Morozov P."/>
            <person name="Fischer S.G."/>
            <person name="Segal G."/>
            <person name="Qu X."/>
            <person name="Rzhetsky A."/>
            <person name="Zhang P."/>
            <person name="Cayanis E."/>
            <person name="De Jong P.J."/>
            <person name="Ju J."/>
            <person name="Kalachikov S."/>
            <person name="Shuman H.A."/>
            <person name="Russo J.J."/>
        </authorList>
    </citation>
    <scope>NUCLEOTIDE SEQUENCE [LARGE SCALE GENOMIC DNA]</scope>
    <source>
        <strain>Philadelphia 1 / ATCC 33152 / DSM 7513</strain>
    </source>
</reference>